<name>NXN_XENLA</name>
<keyword id="KW-0963">Cytoplasm</keyword>
<keyword id="KW-0217">Developmental protein</keyword>
<keyword id="KW-0221">Differentiation</keyword>
<keyword id="KW-0520">NAD</keyword>
<keyword id="KW-0539">Nucleus</keyword>
<keyword id="KW-0560">Oxidoreductase</keyword>
<keyword id="KW-1185">Reference proteome</keyword>
<keyword id="KW-0879">Wnt signaling pathway</keyword>
<sequence length="414" mass="46844">MSGPGLLVELLGEKLVNSEREEADVQALGSRVSLIGLLFGCGMSAPCLQLLPGLKDFYCKTRDRLEIVFVSSDPDQKKWQLFVKDMPWLALPYQEKHRKLKLWNKFRISNIPSLIFIEASTVKTVCRNGLLLVKDDPEGLEFPWGPKPFCEVIAGPLIRNNSQSQESSTLEGSYVGIYFSAYWCPPCRSLTRVLVESYRKIKESGQKFEIVLVSADRSEESFKQYFSEMPWLAVPYSDEARRSRLNRLYGIQGIPNLIILDPKGEVITRQGRVEVLRDIDCKEFPWHPKPVVELTELNAVQLNEGPCLVLFVDSEDEGESEAAKQLIQPIAEKIIAQHKAKDEDAPLLFFVAGEDDMTDSLRDFTNLPEAAPLLTILDMSARAKYVMDVEEITPEIVQSFVTDFLAEKLKPEPI</sequence>
<organism>
    <name type="scientific">Xenopus laevis</name>
    <name type="common">African clawed frog</name>
    <dbReference type="NCBI Taxonomy" id="8355"/>
    <lineage>
        <taxon>Eukaryota</taxon>
        <taxon>Metazoa</taxon>
        <taxon>Chordata</taxon>
        <taxon>Craniata</taxon>
        <taxon>Vertebrata</taxon>
        <taxon>Euteleostomi</taxon>
        <taxon>Amphibia</taxon>
        <taxon>Batrachia</taxon>
        <taxon>Anura</taxon>
        <taxon>Pipoidea</taxon>
        <taxon>Pipidae</taxon>
        <taxon>Xenopodinae</taxon>
        <taxon>Xenopus</taxon>
        <taxon>Xenopus</taxon>
    </lineage>
</organism>
<evidence type="ECO:0000250" key="1">
    <source>
        <dbReference type="UniProtKB" id="P97346"/>
    </source>
</evidence>
<evidence type="ECO:0000255" key="2">
    <source>
        <dbReference type="PROSITE-ProRule" id="PRU00691"/>
    </source>
</evidence>
<evidence type="ECO:0000269" key="3">
    <source>
    </source>
</evidence>
<evidence type="ECO:0000305" key="4"/>
<accession>Q6GM16</accession>
<reference key="1">
    <citation type="submission" date="2004-06" db="EMBL/GenBank/DDBJ databases">
        <authorList>
            <consortium name="NIH - Xenopus Gene Collection (XGC) project"/>
        </authorList>
    </citation>
    <scope>NUCLEOTIDE SEQUENCE [LARGE SCALE MRNA]</scope>
    <source>
        <tissue>Eye</tissue>
    </source>
</reference>
<reference key="2">
    <citation type="journal article" date="2006" name="Nat. Cell Biol.">
        <title>The thioredoxin-related redox-regulating protein nucleoredoxin inhibits Wnt-beta-catenin signalling through dishevelled.</title>
        <authorList>
            <person name="Funato Y."/>
            <person name="Michiue T."/>
            <person name="Asashima M."/>
            <person name="Miki H."/>
        </authorList>
    </citation>
    <scope>FUNCTION</scope>
    <scope>DISRUPTION PHENOTYPE</scope>
</reference>
<proteinExistence type="evidence at transcript level"/>
<gene>
    <name type="primary">nxn</name>
</gene>
<comment type="function">
    <text evidence="3">Functions as a redox-dependent negative regulator of the Wnt signaling pathway.</text>
</comment>
<comment type="catalytic activity">
    <reaction>
        <text>[protein]-dithiol + NAD(+) = [protein]-disulfide + NADH + H(+)</text>
        <dbReference type="Rhea" id="RHEA:18749"/>
        <dbReference type="Rhea" id="RHEA-COMP:10593"/>
        <dbReference type="Rhea" id="RHEA-COMP:10594"/>
        <dbReference type="ChEBI" id="CHEBI:15378"/>
        <dbReference type="ChEBI" id="CHEBI:29950"/>
        <dbReference type="ChEBI" id="CHEBI:50058"/>
        <dbReference type="ChEBI" id="CHEBI:57540"/>
        <dbReference type="ChEBI" id="CHEBI:57945"/>
        <dbReference type="EC" id="1.8.1.8"/>
    </reaction>
</comment>
<comment type="catalytic activity">
    <reaction>
        <text>[protein]-dithiol + NADP(+) = [protein]-disulfide + NADPH + H(+)</text>
        <dbReference type="Rhea" id="RHEA:18753"/>
        <dbReference type="Rhea" id="RHEA-COMP:10593"/>
        <dbReference type="Rhea" id="RHEA-COMP:10594"/>
        <dbReference type="ChEBI" id="CHEBI:15378"/>
        <dbReference type="ChEBI" id="CHEBI:29950"/>
        <dbReference type="ChEBI" id="CHEBI:50058"/>
        <dbReference type="ChEBI" id="CHEBI:57783"/>
        <dbReference type="ChEBI" id="CHEBI:58349"/>
        <dbReference type="EC" id="1.8.1.8"/>
    </reaction>
</comment>
<comment type="subcellular location">
    <subcellularLocation>
        <location evidence="1">Cytoplasm</location>
        <location evidence="1">Cytosol</location>
    </subcellularLocation>
    <subcellularLocation>
        <location evidence="1">Nucleus</location>
    </subcellularLocation>
</comment>
<comment type="disruption phenotype">
    <text evidence="3">Depletion causes significant defects in head formation with absence of eye structures.</text>
</comment>
<comment type="similarity">
    <text evidence="4">Belongs to the nucleoredoxin family.</text>
</comment>
<protein>
    <recommendedName>
        <fullName>Nucleoredoxin</fullName>
        <ecNumber>1.8.1.8</ecNumber>
    </recommendedName>
</protein>
<dbReference type="EC" id="1.8.1.8"/>
<dbReference type="EMBL" id="BC074275">
    <property type="protein sequence ID" value="AAH74275.1"/>
    <property type="molecule type" value="mRNA"/>
</dbReference>
<dbReference type="RefSeq" id="NP_001086161.1">
    <property type="nucleotide sequence ID" value="NM_001092692.1"/>
</dbReference>
<dbReference type="SMR" id="Q6GM16"/>
<dbReference type="DNASU" id="444590"/>
<dbReference type="GeneID" id="444590"/>
<dbReference type="KEGG" id="xla:444590"/>
<dbReference type="AGR" id="Xenbase:XB-GENE-1001776"/>
<dbReference type="CTD" id="444590"/>
<dbReference type="Xenbase" id="XB-GENE-1001776">
    <property type="gene designation" value="nxn.S"/>
</dbReference>
<dbReference type="OMA" id="FYFAAHW"/>
<dbReference type="OrthoDB" id="9440957at2759"/>
<dbReference type="Proteomes" id="UP000186698">
    <property type="component" value="Chromosome 2S"/>
</dbReference>
<dbReference type="Bgee" id="444590">
    <property type="expression patterns" value="Expressed in liver and 19 other cell types or tissues"/>
</dbReference>
<dbReference type="GO" id="GO:0005829">
    <property type="term" value="C:cytosol"/>
    <property type="evidence" value="ECO:0007669"/>
    <property type="project" value="UniProtKB-SubCell"/>
</dbReference>
<dbReference type="GO" id="GO:0005634">
    <property type="term" value="C:nucleus"/>
    <property type="evidence" value="ECO:0000318"/>
    <property type="project" value="GO_Central"/>
</dbReference>
<dbReference type="GO" id="GO:0004791">
    <property type="term" value="F:thioredoxin-disulfide reductase (NADPH) activity"/>
    <property type="evidence" value="ECO:0000318"/>
    <property type="project" value="GO_Central"/>
</dbReference>
<dbReference type="GO" id="GO:0030154">
    <property type="term" value="P:cell differentiation"/>
    <property type="evidence" value="ECO:0007669"/>
    <property type="project" value="UniProtKB-KW"/>
</dbReference>
<dbReference type="GO" id="GO:0072359">
    <property type="term" value="P:circulatory system development"/>
    <property type="evidence" value="ECO:0000250"/>
    <property type="project" value="UniProtKB"/>
</dbReference>
<dbReference type="GO" id="GO:0031397">
    <property type="term" value="P:negative regulation of protein ubiquitination"/>
    <property type="evidence" value="ECO:0000250"/>
    <property type="project" value="UniProtKB"/>
</dbReference>
<dbReference type="GO" id="GO:0030178">
    <property type="term" value="P:negative regulation of Wnt signaling pathway"/>
    <property type="evidence" value="ECO:0000250"/>
    <property type="project" value="UniProtKB"/>
</dbReference>
<dbReference type="GO" id="GO:0016055">
    <property type="term" value="P:Wnt signaling pathway"/>
    <property type="evidence" value="ECO:0007669"/>
    <property type="project" value="UniProtKB-KW"/>
</dbReference>
<dbReference type="CDD" id="cd03071">
    <property type="entry name" value="PDI_b'_NRX"/>
    <property type="match status" value="1"/>
</dbReference>
<dbReference type="CDD" id="cd03009">
    <property type="entry name" value="TryX_like_TryX_NRX"/>
    <property type="match status" value="1"/>
</dbReference>
<dbReference type="FunFam" id="3.40.30.10:FF:000062">
    <property type="entry name" value="Nucleoredoxin"/>
    <property type="match status" value="1"/>
</dbReference>
<dbReference type="FunFam" id="3.40.30.10:FF:000210">
    <property type="entry name" value="nucleoredoxin"/>
    <property type="match status" value="1"/>
</dbReference>
<dbReference type="Gene3D" id="3.40.30.10">
    <property type="entry name" value="Glutaredoxin"/>
    <property type="match status" value="3"/>
</dbReference>
<dbReference type="InterPro" id="IPR041861">
    <property type="entry name" value="NRX_PDI_b"/>
</dbReference>
<dbReference type="InterPro" id="IPR012336">
    <property type="entry name" value="Thioredoxin-like_fold"/>
</dbReference>
<dbReference type="InterPro" id="IPR036249">
    <property type="entry name" value="Thioredoxin-like_sf"/>
</dbReference>
<dbReference type="InterPro" id="IPR013766">
    <property type="entry name" value="Thioredoxin_domain"/>
</dbReference>
<dbReference type="InterPro" id="IPR045870">
    <property type="entry name" value="TryX_NRX_thioredoxin_dom"/>
</dbReference>
<dbReference type="PANTHER" id="PTHR46472">
    <property type="entry name" value="NUCLEOREDOXIN"/>
    <property type="match status" value="1"/>
</dbReference>
<dbReference type="PANTHER" id="PTHR46472:SF1">
    <property type="entry name" value="NUCLEOREDOXIN"/>
    <property type="match status" value="1"/>
</dbReference>
<dbReference type="Pfam" id="PF13848">
    <property type="entry name" value="Thioredoxin_6"/>
    <property type="match status" value="1"/>
</dbReference>
<dbReference type="Pfam" id="PF13905">
    <property type="entry name" value="Thioredoxin_8"/>
    <property type="match status" value="2"/>
</dbReference>
<dbReference type="SUPFAM" id="SSF52833">
    <property type="entry name" value="Thioredoxin-like"/>
    <property type="match status" value="3"/>
</dbReference>
<dbReference type="PROSITE" id="PS51352">
    <property type="entry name" value="THIOREDOXIN_2"/>
    <property type="match status" value="1"/>
</dbReference>
<feature type="chain" id="PRO_0000332936" description="Nucleoredoxin">
    <location>
        <begin position="1"/>
        <end position="414"/>
    </location>
</feature>
<feature type="domain" description="Thioredoxin" evidence="2">
    <location>
        <begin position="131"/>
        <end position="305"/>
    </location>
</feature>